<sequence length="196" mass="22764">MSRYRGPRLKKIRRLGALPGLTRKTPKSGSNLKKKFHSGKKEQYRIRLQEKQKLRFHYGLTERQLLRYVHIAGKAKRSTGQVLLQLLEMRLDNILFRLGMASTIPGARQLVNHRHILVNGRIVDIPSFRCKPRDIITTKDNQRSKRLIQNSIASSDPGKLPKHLTIDTLQYKGLVKKILDRKWVGLKINELLVVEY</sequence>
<geneLocation type="chloroplast"/>
<name>RR4_PHYFL</name>
<evidence type="ECO:0000250" key="1"/>
<evidence type="ECO:0000256" key="2">
    <source>
        <dbReference type="SAM" id="MobiDB-lite"/>
    </source>
</evidence>
<evidence type="ECO:0000305" key="3"/>
<organism>
    <name type="scientific">Phyllostachys flexuosa</name>
    <name type="common">Drooping timber bamboo</name>
    <dbReference type="NCBI Taxonomy" id="29696"/>
    <lineage>
        <taxon>Eukaryota</taxon>
        <taxon>Viridiplantae</taxon>
        <taxon>Streptophyta</taxon>
        <taxon>Embryophyta</taxon>
        <taxon>Tracheophyta</taxon>
        <taxon>Spermatophyta</taxon>
        <taxon>Magnoliopsida</taxon>
        <taxon>Liliopsida</taxon>
        <taxon>Poales</taxon>
        <taxon>Poaceae</taxon>
        <taxon>BOP clade</taxon>
        <taxon>Bambusoideae</taxon>
        <taxon>Arundinarodae</taxon>
        <taxon>Arundinarieae</taxon>
        <taxon>Arundinariinae</taxon>
        <taxon>Phyllostachys</taxon>
    </lineage>
</organism>
<protein>
    <recommendedName>
        <fullName evidence="3">Small ribosomal subunit protein uS4c</fullName>
    </recommendedName>
    <alternativeName>
        <fullName>30S ribosomal protein S4, chloroplastic</fullName>
    </alternativeName>
</protein>
<keyword id="KW-0150">Chloroplast</keyword>
<keyword id="KW-0934">Plastid</keyword>
<keyword id="KW-0687">Ribonucleoprotein</keyword>
<keyword id="KW-0689">Ribosomal protein</keyword>
<keyword id="KW-0694">RNA-binding</keyword>
<keyword id="KW-0699">rRNA-binding</keyword>
<proteinExistence type="inferred from homology"/>
<dbReference type="EMBL" id="Z29249">
    <property type="protein sequence ID" value="CAA82448.1"/>
    <property type="molecule type" value="Genomic_DNA"/>
</dbReference>
<dbReference type="PIR" id="S41276">
    <property type="entry name" value="S41276"/>
</dbReference>
<dbReference type="SMR" id="P69649"/>
<dbReference type="GO" id="GO:0009507">
    <property type="term" value="C:chloroplast"/>
    <property type="evidence" value="ECO:0007669"/>
    <property type="project" value="UniProtKB-SubCell"/>
</dbReference>
<dbReference type="GO" id="GO:0015935">
    <property type="term" value="C:small ribosomal subunit"/>
    <property type="evidence" value="ECO:0007669"/>
    <property type="project" value="InterPro"/>
</dbReference>
<dbReference type="GO" id="GO:0019843">
    <property type="term" value="F:rRNA binding"/>
    <property type="evidence" value="ECO:0007669"/>
    <property type="project" value="UniProtKB-KW"/>
</dbReference>
<dbReference type="GO" id="GO:0003735">
    <property type="term" value="F:structural constituent of ribosome"/>
    <property type="evidence" value="ECO:0007669"/>
    <property type="project" value="InterPro"/>
</dbReference>
<dbReference type="GO" id="GO:0042274">
    <property type="term" value="P:ribosomal small subunit biogenesis"/>
    <property type="evidence" value="ECO:0007669"/>
    <property type="project" value="TreeGrafter"/>
</dbReference>
<dbReference type="GO" id="GO:0006412">
    <property type="term" value="P:translation"/>
    <property type="evidence" value="ECO:0007669"/>
    <property type="project" value="InterPro"/>
</dbReference>
<dbReference type="CDD" id="cd00165">
    <property type="entry name" value="S4"/>
    <property type="match status" value="1"/>
</dbReference>
<dbReference type="FunFam" id="1.10.1050.10:FF:000002">
    <property type="entry name" value="30S ribosomal protein S4, chloroplastic"/>
    <property type="match status" value="1"/>
</dbReference>
<dbReference type="FunFam" id="3.10.290.10:FF:000081">
    <property type="entry name" value="30S ribosomal protein S4, chloroplastic"/>
    <property type="match status" value="1"/>
</dbReference>
<dbReference type="Gene3D" id="1.10.1050.10">
    <property type="entry name" value="Ribosomal Protein S4 Delta 41, Chain A, domain 1"/>
    <property type="match status" value="1"/>
</dbReference>
<dbReference type="Gene3D" id="3.10.290.10">
    <property type="entry name" value="RNA-binding S4 domain"/>
    <property type="match status" value="1"/>
</dbReference>
<dbReference type="HAMAP" id="MF_01306_B">
    <property type="entry name" value="Ribosomal_uS4_B"/>
    <property type="match status" value="1"/>
</dbReference>
<dbReference type="InterPro" id="IPR022801">
    <property type="entry name" value="Ribosomal_uS4"/>
</dbReference>
<dbReference type="InterPro" id="IPR005709">
    <property type="entry name" value="Ribosomal_uS4_bac-type"/>
</dbReference>
<dbReference type="InterPro" id="IPR018079">
    <property type="entry name" value="Ribosomal_uS4_CS"/>
</dbReference>
<dbReference type="InterPro" id="IPR001912">
    <property type="entry name" value="Ribosomal_uS4_N"/>
</dbReference>
<dbReference type="InterPro" id="IPR002942">
    <property type="entry name" value="S4_RNA-bd"/>
</dbReference>
<dbReference type="InterPro" id="IPR036986">
    <property type="entry name" value="S4_RNA-bd_sf"/>
</dbReference>
<dbReference type="NCBIfam" id="NF003717">
    <property type="entry name" value="PRK05327.1"/>
    <property type="match status" value="1"/>
</dbReference>
<dbReference type="NCBIfam" id="TIGR01017">
    <property type="entry name" value="rpsD_bact"/>
    <property type="match status" value="1"/>
</dbReference>
<dbReference type="PANTHER" id="PTHR11831">
    <property type="entry name" value="30S 40S RIBOSOMAL PROTEIN"/>
    <property type="match status" value="1"/>
</dbReference>
<dbReference type="PANTHER" id="PTHR11831:SF4">
    <property type="entry name" value="SMALL RIBOSOMAL SUBUNIT PROTEIN US4M"/>
    <property type="match status" value="1"/>
</dbReference>
<dbReference type="Pfam" id="PF00163">
    <property type="entry name" value="Ribosomal_S4"/>
    <property type="match status" value="1"/>
</dbReference>
<dbReference type="Pfam" id="PF01479">
    <property type="entry name" value="S4"/>
    <property type="match status" value="1"/>
</dbReference>
<dbReference type="SMART" id="SM01390">
    <property type="entry name" value="Ribosomal_S4"/>
    <property type="match status" value="1"/>
</dbReference>
<dbReference type="SMART" id="SM00363">
    <property type="entry name" value="S4"/>
    <property type="match status" value="1"/>
</dbReference>
<dbReference type="SUPFAM" id="SSF55174">
    <property type="entry name" value="Alpha-L RNA-binding motif"/>
    <property type="match status" value="1"/>
</dbReference>
<dbReference type="PROSITE" id="PS00632">
    <property type="entry name" value="RIBOSOMAL_S4"/>
    <property type="match status" value="1"/>
</dbReference>
<dbReference type="PROSITE" id="PS50889">
    <property type="entry name" value="S4"/>
    <property type="match status" value="1"/>
</dbReference>
<accession>P69649</accession>
<accession>P36448</accession>
<accession>P36469</accession>
<gene>
    <name type="primary">rps4</name>
</gene>
<feature type="chain" id="PRO_0000132649" description="Small ribosomal subunit protein uS4c">
    <location>
        <begin position="1"/>
        <end position="196" status="greater than"/>
    </location>
</feature>
<feature type="domain" description="S4 RNA-binding">
    <location>
        <begin position="89"/>
        <end position="150"/>
    </location>
</feature>
<feature type="region of interest" description="Disordered" evidence="2">
    <location>
        <begin position="17"/>
        <end position="36"/>
    </location>
</feature>
<feature type="non-terminal residue">
    <location>
        <position position="196"/>
    </location>
</feature>
<comment type="function">
    <text evidence="1">One of the primary rRNA binding proteins, it binds directly to 16S rRNA where it nucleates assembly of the body of the 30S subunit.</text>
</comment>
<comment type="function">
    <text evidence="1">With S5 and S12 plays an important role in translational accuracy.</text>
</comment>
<comment type="subunit">
    <text evidence="1">Part of the 30S ribosomal subunit. Contacts protein S5. The interaction surface between S4 and S5 is involved in control of translational fidelity (By similarity).</text>
</comment>
<comment type="subcellular location">
    <subcellularLocation>
        <location>Plastid</location>
        <location>Chloroplast</location>
    </subcellularLocation>
</comment>
<comment type="similarity">
    <text evidence="3">Belongs to the universal ribosomal protein uS4 family.</text>
</comment>
<reference key="1">
    <citation type="journal article" date="1994" name="Plant Syst. Evol.">
        <title>The chloroplast gene rps4 as a tool for the study of Poaceae phylogeny.</title>
        <authorList>
            <person name="Nadot S."/>
            <person name="Bajon R."/>
            <person name="Lejeune B."/>
        </authorList>
        <dbReference type="AGRICOLA" id="IND20417698"/>
    </citation>
    <scope>NUCLEOTIDE SEQUENCE [GENOMIC DNA]</scope>
</reference>